<dbReference type="EMBL" id="CP000267">
    <property type="protein sequence ID" value="ABD69826.1"/>
    <property type="molecule type" value="Genomic_DNA"/>
</dbReference>
<dbReference type="RefSeq" id="WP_011464394.1">
    <property type="nucleotide sequence ID" value="NC_007908.1"/>
</dbReference>
<dbReference type="SMR" id="Q21WM7"/>
<dbReference type="STRING" id="338969.Rfer_2102"/>
<dbReference type="KEGG" id="rfr:Rfer_2102"/>
<dbReference type="eggNOG" id="COG2924">
    <property type="taxonomic scope" value="Bacteria"/>
</dbReference>
<dbReference type="HOGENOM" id="CLU_170994_0_0_4"/>
<dbReference type="OrthoDB" id="9804318at2"/>
<dbReference type="Proteomes" id="UP000008332">
    <property type="component" value="Chromosome"/>
</dbReference>
<dbReference type="GO" id="GO:0005829">
    <property type="term" value="C:cytosol"/>
    <property type="evidence" value="ECO:0007669"/>
    <property type="project" value="TreeGrafter"/>
</dbReference>
<dbReference type="GO" id="GO:0005506">
    <property type="term" value="F:iron ion binding"/>
    <property type="evidence" value="ECO:0007669"/>
    <property type="project" value="UniProtKB-UniRule"/>
</dbReference>
<dbReference type="GO" id="GO:0034599">
    <property type="term" value="P:cellular response to oxidative stress"/>
    <property type="evidence" value="ECO:0007669"/>
    <property type="project" value="TreeGrafter"/>
</dbReference>
<dbReference type="FunFam" id="1.10.3880.10:FF:000001">
    <property type="entry name" value="Probable Fe(2+)-trafficking protein"/>
    <property type="match status" value="1"/>
</dbReference>
<dbReference type="Gene3D" id="1.10.3880.10">
    <property type="entry name" value="Fe(II) trafficking protein YggX"/>
    <property type="match status" value="1"/>
</dbReference>
<dbReference type="HAMAP" id="MF_00686">
    <property type="entry name" value="Fe_traffic_YggX"/>
    <property type="match status" value="1"/>
</dbReference>
<dbReference type="InterPro" id="IPR007457">
    <property type="entry name" value="Fe_traffick_prot_YggX"/>
</dbReference>
<dbReference type="InterPro" id="IPR036766">
    <property type="entry name" value="Fe_traffick_prot_YggX_sf"/>
</dbReference>
<dbReference type="NCBIfam" id="NF003817">
    <property type="entry name" value="PRK05408.1"/>
    <property type="match status" value="1"/>
</dbReference>
<dbReference type="PANTHER" id="PTHR36965">
    <property type="entry name" value="FE(2+)-TRAFFICKING PROTEIN-RELATED"/>
    <property type="match status" value="1"/>
</dbReference>
<dbReference type="PANTHER" id="PTHR36965:SF1">
    <property type="entry name" value="FE(2+)-TRAFFICKING PROTEIN-RELATED"/>
    <property type="match status" value="1"/>
</dbReference>
<dbReference type="Pfam" id="PF04362">
    <property type="entry name" value="Iron_traffic"/>
    <property type="match status" value="1"/>
</dbReference>
<dbReference type="PIRSF" id="PIRSF029827">
    <property type="entry name" value="Fe_traffic_YggX"/>
    <property type="match status" value="1"/>
</dbReference>
<dbReference type="SUPFAM" id="SSF111148">
    <property type="entry name" value="YggX-like"/>
    <property type="match status" value="1"/>
</dbReference>
<evidence type="ECO:0000255" key="1">
    <source>
        <dbReference type="HAMAP-Rule" id="MF_00686"/>
    </source>
</evidence>
<accession>Q21WM7</accession>
<gene>
    <name type="ordered locus">Rfer_2102</name>
</gene>
<protein>
    <recommendedName>
        <fullName evidence="1">Probable Fe(2+)-trafficking protein</fullName>
    </recommendedName>
</protein>
<organism>
    <name type="scientific">Albidiferax ferrireducens (strain ATCC BAA-621 / DSM 15236 / T118)</name>
    <name type="common">Rhodoferax ferrireducens</name>
    <dbReference type="NCBI Taxonomy" id="338969"/>
    <lineage>
        <taxon>Bacteria</taxon>
        <taxon>Pseudomonadati</taxon>
        <taxon>Pseudomonadota</taxon>
        <taxon>Betaproteobacteria</taxon>
        <taxon>Burkholderiales</taxon>
        <taxon>Comamonadaceae</taxon>
        <taxon>Rhodoferax</taxon>
    </lineage>
</organism>
<keyword id="KW-0408">Iron</keyword>
<keyword id="KW-1185">Reference proteome</keyword>
<reference key="1">
    <citation type="submission" date="2006-02" db="EMBL/GenBank/DDBJ databases">
        <title>Complete sequence of chromosome of Rhodoferax ferrireducens DSM 15236.</title>
        <authorList>
            <person name="Copeland A."/>
            <person name="Lucas S."/>
            <person name="Lapidus A."/>
            <person name="Barry K."/>
            <person name="Detter J.C."/>
            <person name="Glavina del Rio T."/>
            <person name="Hammon N."/>
            <person name="Israni S."/>
            <person name="Pitluck S."/>
            <person name="Brettin T."/>
            <person name="Bruce D."/>
            <person name="Han C."/>
            <person name="Tapia R."/>
            <person name="Gilna P."/>
            <person name="Kiss H."/>
            <person name="Schmutz J."/>
            <person name="Larimer F."/>
            <person name="Land M."/>
            <person name="Kyrpides N."/>
            <person name="Ivanova N."/>
            <person name="Richardson P."/>
        </authorList>
    </citation>
    <scope>NUCLEOTIDE SEQUENCE [LARGE SCALE GENOMIC DNA]</scope>
    <source>
        <strain>ATCC BAA-621 / DSM 15236 / T118</strain>
    </source>
</reference>
<sequence>MARTVNCIKLGKEAEGLDFPPYPGELGKRIWESVSKQAWADWLKHQTMLVNENRLNLADARARQYLARQMENHFFGGGADAAQGYVPPSA</sequence>
<comment type="function">
    <text evidence="1">Could be a mediator in iron transactions between iron acquisition and iron-requiring processes, such as synthesis and/or repair of Fe-S clusters in biosynthetic enzymes.</text>
</comment>
<comment type="similarity">
    <text evidence="1">Belongs to the Fe(2+)-trafficking protein family.</text>
</comment>
<feature type="chain" id="PRO_0000246114" description="Probable Fe(2+)-trafficking protein">
    <location>
        <begin position="1"/>
        <end position="90"/>
    </location>
</feature>
<name>FETP_ALBFT</name>
<proteinExistence type="inferred from homology"/>